<comment type="function">
    <text evidence="3">May contribute to the transparency and refractive index of the lens. Has chaperone-like activity, preventing aggregation of various proteins under a wide range of stress conditions. In lens epithelial cells, stabilizes the ATP6V1A protein, preventing its degradation by the proteasome (By similarity).</text>
</comment>
<comment type="subunit">
    <text evidence="2 3">Heteromer composed of three CRYAA and one CRYAB subunits. Aggregates with homologous proteins, including the small heat shock protein HSPB1, to form large heteromeric complexes. Inter-subunit bridging via zinc ions enhances stability, which is crucial as there is no protein turn over in the lens. Interacts with HSPBAP1 and TTN/titin. Interacts with TMEM109; in the cellular response to DNA damage. Interacts with DES; binds rapidly during early stages of DES filament assembly and a reduced binding seen in the later stages. Interacts with TMED10; the interaction mediates the translocation from the cytoplasm into the ERGIC (endoplasmic reticulum-Golgi intermediate compartment) and thereby secretion. Interacts with ATP6V1A and with MTOR, forming a ternary complex (By similarity).</text>
</comment>
<comment type="interaction">
    <interactant intactId="EBI-7824601">
        <id>P02510</id>
    </interactant>
    <interactant intactId="EBI-15796552">
        <id>P02470</id>
        <label>CRYAA</label>
    </interactant>
    <organismsDiffer>false</organismsDiffer>
    <experiments>4</experiments>
</comment>
<comment type="subcellular location">
    <subcellularLocation>
        <location evidence="2">Cytoplasm</location>
    </subcellularLocation>
    <subcellularLocation>
        <location evidence="2">Nucleus</location>
    </subcellularLocation>
    <subcellularLocation>
        <location evidence="2">Secreted</location>
    </subcellularLocation>
    <subcellularLocation>
        <location evidence="3">Lysosome</location>
    </subcellularLocation>
    <text evidence="2">Translocates to the nucleus during heat shock and resides in sub-nuclear structures known as SC35 speckles or nuclear splicing speckles. Localizes at the Z-bands and the intercalated disk in cardiomyocytes. Can be secreted; the secretion is dependent on protein unfolding and facilitated by the cargo receptor TMED10; it results in protein translocation from the cytoplasm into the ERGIC (endoplasmic reticulum-Golgi intermediate compartment) followed by vesicle entry and secretion.</text>
</comment>
<comment type="tissue specificity">
    <text>Lens as well as other tissues.</text>
</comment>
<comment type="PTM">
    <text>It is not known whether either Lys-90, or Lys-92, or both are glycated.</text>
</comment>
<comment type="similarity">
    <text evidence="5">Belongs to the small heat shock protein (HSP20) family.</text>
</comment>
<proteinExistence type="evidence at protein level"/>
<protein>
    <recommendedName>
        <fullName>Alpha-crystallin B chain</fullName>
    </recommendedName>
    <alternativeName>
        <fullName>Alpha(B)-crystallin</fullName>
    </alternativeName>
</protein>
<reference key="1">
    <citation type="journal article" date="1974" name="Eur. J. Biochem.">
        <title>The amino-acids sequence of the alphaB2 chain of bovine alpha-crystallin.</title>
        <authorList>
            <person name="van der Ouderaa F.J."/>
            <person name="de Jong W.W."/>
            <person name="Hilderink A."/>
            <person name="Bloemendal H."/>
        </authorList>
    </citation>
    <scope>PROTEIN SEQUENCE</scope>
    <scope>ACETYLATION AT MET-1</scope>
</reference>
<reference key="2">
    <citation type="submission" date="1991-11" db="UniProtKB">
        <authorList>
            <person name="de Jong W.W."/>
        </authorList>
    </citation>
    <scope>SEQUENCE REVISION TO 80</scope>
</reference>
<reference key="3">
    <citation type="submission" date="1999-06" db="EMBL/GenBank/DDBJ databases">
        <authorList>
            <person name="Kelley P.B."/>
            <person name="Abraham E.C."/>
            <person name="Zhao H.R."/>
            <person name="Shroff N.P."/>
            <person name="Cherian M."/>
            <person name="Thomas J.J."/>
        </authorList>
    </citation>
    <scope>NUCLEOTIDE SEQUENCE [MRNA]</scope>
</reference>
<reference key="4">
    <citation type="submission" date="2005-08" db="EMBL/GenBank/DDBJ databases">
        <authorList>
            <consortium name="NIH - Mammalian Gene Collection (MGC) project"/>
        </authorList>
    </citation>
    <scope>NUCLEOTIDE SEQUENCE [LARGE SCALE MRNA]</scope>
    <source>
        <strain>Hereford</strain>
        <tissue>Testis</tissue>
    </source>
</reference>
<reference key="5">
    <citation type="journal article" date="1993" name="Mol. Biol. Rep.">
        <title>Comparison of the homologous carboxy-terminal domain and tail of alpha-crystallin and small heat shock protein.</title>
        <authorList>
            <person name="Merck K.B."/>
            <person name="Horwitz J."/>
            <person name="Kersten M."/>
            <person name="Overkamp P."/>
            <person name="Gaestel M."/>
            <person name="Bloemendal H."/>
            <person name="de Jong W.W."/>
        </authorList>
    </citation>
    <scope>NUCLEOTIDE SEQUENCE [MRNA] OF 69-175</scope>
</reference>
<reference key="6">
    <citation type="journal article" date="1987" name="Biochem. Biophys. Res. Commun.">
        <title>The phosphorylation sites of the B2 chain of bovine alpha-crystallin.</title>
        <authorList>
            <person name="Chiesa R."/>
            <person name="Gawinowicz-Kolks M.A."/>
            <person name="Kleiman N.J."/>
            <person name="Spector A."/>
        </authorList>
    </citation>
    <scope>PHOSPHORYLATION AT SER-45 AND SER-59</scope>
</reference>
<reference key="7">
    <citation type="journal article" date="1989" name="FEBS Lett.">
        <title>The in vivo phosphorylation sites of bovine alpha B-crystallin.</title>
        <authorList>
            <person name="Voorter C.E.M."/>
            <person name="de Haard-Hoekman W.A."/>
            <person name="Roersma E.S."/>
            <person name="Meyer H.E."/>
            <person name="Bloemendal H."/>
            <person name="de Jong W.W."/>
        </authorList>
    </citation>
    <scope>PHOSPHORYLATION AT SER-19 AND SER-45</scope>
</reference>
<reference key="8">
    <citation type="journal article" date="1992" name="Protein Sci.">
        <title>Identification of the posttranslational modifications of bovine lens alpha B-crystallins by mass spectrometry.</title>
        <authorList>
            <person name="Smith J.B."/>
            <person name="Sun Y."/>
            <person name="Smith D.L."/>
            <person name="Green B."/>
        </authorList>
    </citation>
    <scope>SEQUENCE REVISION TO 80</scope>
    <scope>PHOSPHORYLATION AT SER-19; SER-45 AND SER-59</scope>
</reference>
<reference key="9">
    <citation type="journal article" date="1994" name="Biochem. Biophys. Res. Commun.">
        <title>Site selectivity in the glycation of alpha A- and alpha B-crystallins by glucose.</title>
        <authorList>
            <person name="Abraham E.C."/>
            <person name="Cherian M."/>
            <person name="Smith J.B."/>
        </authorList>
    </citation>
    <scope>GLYCATION AT LYS-90 AND LYS-92</scope>
    <scope>IDENTIFICATION BY MASS SPECTROMETRY</scope>
</reference>
<name>CRYAB_BOVIN</name>
<sequence>MDIAIHHPWIRRPFFPFHSPSRLFDQFFGEHLLESDLFPASTSLSPFYLRPPSFLRAPSWIDTGLSEMRLEKDRFSVNLDVKHFSPEELKVKVLGDVIEVHGKHEERQDEHGFISREFHRKYRIPADVDPLAITSSLSSDGVLTVNGPRKQASGPERTIPITREEKPAVTAAPKK</sequence>
<organism>
    <name type="scientific">Bos taurus</name>
    <name type="common">Bovine</name>
    <dbReference type="NCBI Taxonomy" id="9913"/>
    <lineage>
        <taxon>Eukaryota</taxon>
        <taxon>Metazoa</taxon>
        <taxon>Chordata</taxon>
        <taxon>Craniata</taxon>
        <taxon>Vertebrata</taxon>
        <taxon>Euteleostomi</taxon>
        <taxon>Mammalia</taxon>
        <taxon>Eutheria</taxon>
        <taxon>Laurasiatheria</taxon>
        <taxon>Artiodactyla</taxon>
        <taxon>Ruminantia</taxon>
        <taxon>Pecora</taxon>
        <taxon>Bovidae</taxon>
        <taxon>Bovinae</taxon>
        <taxon>Bos</taxon>
    </lineage>
</organism>
<keyword id="KW-0007">Acetylation</keyword>
<keyword id="KW-0143">Chaperone</keyword>
<keyword id="KW-0963">Cytoplasm</keyword>
<keyword id="KW-0903">Direct protein sequencing</keyword>
<keyword id="KW-0273">Eye lens protein</keyword>
<keyword id="KW-0971">Glycation</keyword>
<keyword id="KW-0325">Glycoprotein</keyword>
<keyword id="KW-0458">Lysosome</keyword>
<keyword id="KW-0479">Metal-binding</keyword>
<keyword id="KW-0488">Methylation</keyword>
<keyword id="KW-0539">Nucleus</keyword>
<keyword id="KW-0597">Phosphoprotein</keyword>
<keyword id="KW-1185">Reference proteome</keyword>
<keyword id="KW-0964">Secreted</keyword>
<keyword id="KW-0862">Zinc</keyword>
<accession>P02510</accession>
<accession>O46508</accession>
<accession>Q3SZQ9</accession>
<evidence type="ECO:0000250" key="1"/>
<evidence type="ECO:0000250" key="2">
    <source>
        <dbReference type="UniProtKB" id="P02511"/>
    </source>
</evidence>
<evidence type="ECO:0000250" key="3">
    <source>
        <dbReference type="UniProtKB" id="P23927"/>
    </source>
</evidence>
<evidence type="ECO:0000250" key="4">
    <source>
        <dbReference type="UniProtKB" id="P23928"/>
    </source>
</evidence>
<evidence type="ECO:0000255" key="5">
    <source>
        <dbReference type="PROSITE-ProRule" id="PRU00285"/>
    </source>
</evidence>
<evidence type="ECO:0000256" key="6">
    <source>
        <dbReference type="SAM" id="MobiDB-lite"/>
    </source>
</evidence>
<evidence type="ECO:0000269" key="7">
    <source>
    </source>
</evidence>
<evidence type="ECO:0000269" key="8">
    <source>
    </source>
</evidence>
<evidence type="ECO:0000269" key="9">
    <source>
    </source>
</evidence>
<evidence type="ECO:0000269" key="10">
    <source>
    </source>
</evidence>
<evidence type="ECO:0000269" key="11">
    <source>
    </source>
</evidence>
<dbReference type="EMBL" id="AF029793">
    <property type="protein sequence ID" value="AAB95323.2"/>
    <property type="molecule type" value="mRNA"/>
</dbReference>
<dbReference type="EMBL" id="BC102745">
    <property type="protein sequence ID" value="AAI02746.1"/>
    <property type="molecule type" value="mRNA"/>
</dbReference>
<dbReference type="PIR" id="A42446">
    <property type="entry name" value="CYBOAB"/>
</dbReference>
<dbReference type="RefSeq" id="NP_776715.1">
    <property type="nucleotide sequence ID" value="NM_174290.2"/>
</dbReference>
<dbReference type="BMRB" id="P02510"/>
<dbReference type="EMDB" id="EMD-7969"/>
<dbReference type="SMR" id="P02510"/>
<dbReference type="BioGRID" id="159035">
    <property type="interactions" value="1"/>
</dbReference>
<dbReference type="DIP" id="DIP-43761N"/>
<dbReference type="FunCoup" id="P02510">
    <property type="interactions" value="324"/>
</dbReference>
<dbReference type="IntAct" id="P02510">
    <property type="interactions" value="1"/>
</dbReference>
<dbReference type="MINT" id="P02510"/>
<dbReference type="STRING" id="9913.ENSBTAP00000059200"/>
<dbReference type="CarbonylDB" id="P02510"/>
<dbReference type="GlyConnect" id="32">
    <property type="glycosylation" value="1 O-GlcNAc glycan (1 site)"/>
</dbReference>
<dbReference type="GlyConnect" id="37">
    <property type="glycosylation" value="1 O-GlcNAc glycan"/>
</dbReference>
<dbReference type="GlyConnect" id="38">
    <property type="glycosylation" value="1 O-GlcNAc glycan"/>
</dbReference>
<dbReference type="GlyCosmos" id="P02510">
    <property type="glycosylation" value="2 sites, 1 glycan"/>
</dbReference>
<dbReference type="GlyGen" id="P02510">
    <property type="glycosylation" value="4 sites, 1 O-linked glycan (3 sites)"/>
</dbReference>
<dbReference type="iPTMnet" id="P02510"/>
<dbReference type="PaxDb" id="9913-ENSBTAP00000000556"/>
<dbReference type="PeptideAtlas" id="P02510"/>
<dbReference type="GeneID" id="281719"/>
<dbReference type="KEGG" id="bta:281719"/>
<dbReference type="CTD" id="1410"/>
<dbReference type="VEuPathDB" id="HostDB:ENSBTAG00000000434"/>
<dbReference type="eggNOG" id="KOG3591">
    <property type="taxonomic scope" value="Eukaryota"/>
</dbReference>
<dbReference type="HOGENOM" id="CLU_095001_2_0_1"/>
<dbReference type="InParanoid" id="P02510"/>
<dbReference type="OrthoDB" id="1431247at2759"/>
<dbReference type="TreeFam" id="TF105049"/>
<dbReference type="Reactome" id="R-BTA-3371571">
    <property type="pathway name" value="HSF1-dependent transactivation"/>
</dbReference>
<dbReference type="Proteomes" id="UP000009136">
    <property type="component" value="Chromosome 15"/>
</dbReference>
<dbReference type="Bgee" id="ENSBTAG00000000434">
    <property type="expression patterns" value="Expressed in gluteus medius and 102 other cell types or tissues"/>
</dbReference>
<dbReference type="GO" id="GO:0005737">
    <property type="term" value="C:cytoplasm"/>
    <property type="evidence" value="ECO:0000250"/>
    <property type="project" value="UniProtKB"/>
</dbReference>
<dbReference type="GO" id="GO:0005576">
    <property type="term" value="C:extracellular region"/>
    <property type="evidence" value="ECO:0007669"/>
    <property type="project" value="UniProtKB-SubCell"/>
</dbReference>
<dbReference type="GO" id="GO:0005764">
    <property type="term" value="C:lysosome"/>
    <property type="evidence" value="ECO:0007669"/>
    <property type="project" value="UniProtKB-SubCell"/>
</dbReference>
<dbReference type="GO" id="GO:0005634">
    <property type="term" value="C:nucleus"/>
    <property type="evidence" value="ECO:0000250"/>
    <property type="project" value="UniProtKB"/>
</dbReference>
<dbReference type="GO" id="GO:0032991">
    <property type="term" value="C:protein-containing complex"/>
    <property type="evidence" value="ECO:0000250"/>
    <property type="project" value="UniProtKB"/>
</dbReference>
<dbReference type="GO" id="GO:0046872">
    <property type="term" value="F:metal ion binding"/>
    <property type="evidence" value="ECO:0007669"/>
    <property type="project" value="UniProtKB-KW"/>
</dbReference>
<dbReference type="GO" id="GO:0042803">
    <property type="term" value="F:protein homodimerization activity"/>
    <property type="evidence" value="ECO:0000250"/>
    <property type="project" value="UniProtKB"/>
</dbReference>
<dbReference type="GO" id="GO:0005212">
    <property type="term" value="F:structural constituent of eye lens"/>
    <property type="evidence" value="ECO:0007669"/>
    <property type="project" value="UniProtKB-KW"/>
</dbReference>
<dbReference type="GO" id="GO:0051082">
    <property type="term" value="F:unfolded protein binding"/>
    <property type="evidence" value="ECO:0000318"/>
    <property type="project" value="GO_Central"/>
</dbReference>
<dbReference type="GO" id="GO:0043066">
    <property type="term" value="P:negative regulation of apoptotic process"/>
    <property type="evidence" value="ECO:0000250"/>
    <property type="project" value="AgBase"/>
</dbReference>
<dbReference type="GO" id="GO:0045892">
    <property type="term" value="P:negative regulation of DNA-templated transcription"/>
    <property type="evidence" value="ECO:0000250"/>
    <property type="project" value="UniProtKB"/>
</dbReference>
<dbReference type="GO" id="GO:0032387">
    <property type="term" value="P:negative regulation of intracellular transport"/>
    <property type="evidence" value="ECO:0000250"/>
    <property type="project" value="AgBase"/>
</dbReference>
<dbReference type="GO" id="GO:0042026">
    <property type="term" value="P:protein refolding"/>
    <property type="evidence" value="ECO:0000318"/>
    <property type="project" value="GO_Central"/>
</dbReference>
<dbReference type="GO" id="GO:0009408">
    <property type="term" value="P:response to heat"/>
    <property type="evidence" value="ECO:0000318"/>
    <property type="project" value="GO_Central"/>
</dbReference>
<dbReference type="CDD" id="cd06498">
    <property type="entry name" value="ACD_alphaB-crystallin_HspB5"/>
    <property type="match status" value="1"/>
</dbReference>
<dbReference type="FunFam" id="2.60.40.790:FF:000011">
    <property type="entry name" value="Alpha-crystallin B chain"/>
    <property type="match status" value="1"/>
</dbReference>
<dbReference type="Gene3D" id="2.60.40.790">
    <property type="match status" value="1"/>
</dbReference>
<dbReference type="InterPro" id="IPR002068">
    <property type="entry name" value="A-crystallin/Hsp20_dom"/>
</dbReference>
<dbReference type="InterPro" id="IPR037882">
    <property type="entry name" value="ACD_alphaB-crystallin"/>
</dbReference>
<dbReference type="InterPro" id="IPR055269">
    <property type="entry name" value="Alpha-crystallin/HSP_16"/>
</dbReference>
<dbReference type="InterPro" id="IPR001436">
    <property type="entry name" value="Alpha-crystallin/sHSP_animal"/>
</dbReference>
<dbReference type="InterPro" id="IPR003090">
    <property type="entry name" value="Alpha-crystallin_N"/>
</dbReference>
<dbReference type="InterPro" id="IPR008978">
    <property type="entry name" value="HSP20-like_chaperone"/>
</dbReference>
<dbReference type="PANTHER" id="PTHR45640:SF5">
    <property type="entry name" value="ALPHA-CRYSTALLIN B CHAIN"/>
    <property type="match status" value="1"/>
</dbReference>
<dbReference type="PANTHER" id="PTHR45640">
    <property type="entry name" value="HEAT SHOCK PROTEIN HSP-12.2-RELATED"/>
    <property type="match status" value="1"/>
</dbReference>
<dbReference type="Pfam" id="PF00525">
    <property type="entry name" value="Crystallin"/>
    <property type="match status" value="1"/>
</dbReference>
<dbReference type="Pfam" id="PF00011">
    <property type="entry name" value="HSP20"/>
    <property type="match status" value="1"/>
</dbReference>
<dbReference type="PIRSF" id="PIRSF036514">
    <property type="entry name" value="Sm_HSP_B1"/>
    <property type="match status" value="1"/>
</dbReference>
<dbReference type="PRINTS" id="PR00299">
    <property type="entry name" value="ACRYSTALLIN"/>
</dbReference>
<dbReference type="SUPFAM" id="SSF49764">
    <property type="entry name" value="HSP20-like chaperones"/>
    <property type="match status" value="1"/>
</dbReference>
<dbReference type="PROSITE" id="PS01031">
    <property type="entry name" value="SHSP"/>
    <property type="match status" value="1"/>
</dbReference>
<gene>
    <name type="primary">CRYAB</name>
    <name type="synonym">CRYA2</name>
</gene>
<feature type="chain" id="PRO_0000125906" description="Alpha-crystallin B chain">
    <location>
        <begin position="1"/>
        <end position="175"/>
    </location>
</feature>
<feature type="domain" description="sHSP" evidence="5">
    <location>
        <begin position="56"/>
        <end position="164"/>
    </location>
</feature>
<feature type="region of interest" description="Disordered" evidence="6">
    <location>
        <begin position="144"/>
        <end position="175"/>
    </location>
</feature>
<feature type="binding site" evidence="1">
    <location>
        <position position="83"/>
    </location>
    <ligand>
        <name>Zn(2+)</name>
        <dbReference type="ChEBI" id="CHEBI:29105"/>
        <label>1</label>
    </ligand>
</feature>
<feature type="binding site" evidence="1">
    <location>
        <position position="104"/>
    </location>
    <ligand>
        <name>Zn(2+)</name>
        <dbReference type="ChEBI" id="CHEBI:29105"/>
        <label>2</label>
    </ligand>
</feature>
<feature type="binding site" evidence="1">
    <location>
        <position position="106"/>
    </location>
    <ligand>
        <name>Zn(2+)</name>
        <dbReference type="ChEBI" id="CHEBI:29105"/>
        <label>2</label>
    </ligand>
</feature>
<feature type="binding site" evidence="1">
    <location>
        <position position="111"/>
    </location>
    <ligand>
        <name>Zn(2+)</name>
        <dbReference type="ChEBI" id="CHEBI:29105"/>
        <label>1</label>
    </ligand>
</feature>
<feature type="binding site" evidence="1">
    <location>
        <position position="119"/>
    </location>
    <ligand>
        <name>Zn(2+)</name>
        <dbReference type="ChEBI" id="CHEBI:29105"/>
        <label>1</label>
    </ligand>
</feature>
<feature type="site" description="Not glycated">
    <location>
        <position position="72"/>
    </location>
</feature>
<feature type="site" description="Not glycated">
    <location>
        <position position="82"/>
    </location>
</feature>
<feature type="site" description="Not glycated">
    <location>
        <position position="103"/>
    </location>
</feature>
<feature type="site" description="Not glycated">
    <location>
        <position position="121"/>
    </location>
</feature>
<feature type="site" description="Not glycated">
    <location>
        <position position="150"/>
    </location>
</feature>
<feature type="site" description="Not glycated">
    <location>
        <position position="166"/>
    </location>
</feature>
<feature type="site" description="Not glycated">
    <location>
        <position position="174"/>
    </location>
</feature>
<feature type="site" description="Not glycated">
    <location>
        <position position="175"/>
    </location>
</feature>
<feature type="modified residue" description="N-acetylmethionine" evidence="10">
    <location>
        <position position="1"/>
    </location>
</feature>
<feature type="modified residue" description="Phosphoserine" evidence="7 8">
    <location>
        <position position="19"/>
    </location>
</feature>
<feature type="modified residue" description="Phosphoserine" evidence="7 8 9">
    <location>
        <position position="45"/>
    </location>
</feature>
<feature type="modified residue" description="Phosphoserine" evidence="7 9">
    <location>
        <position position="59"/>
    </location>
</feature>
<feature type="modified residue" description="N6-acetyllysine; alternate" evidence="2">
    <location>
        <position position="92"/>
    </location>
</feature>
<feature type="modified residue" description="N6-acetyllysine" evidence="2">
    <location>
        <position position="166"/>
    </location>
</feature>
<feature type="glycosylation site" description="O-linked (GlcNAc) serine" evidence="2">
    <location>
        <position position="41"/>
    </location>
</feature>
<feature type="glycosylation site" description="N-linked (Glc) (glycation) lysine" evidence="11">
    <location>
        <position position="90"/>
    </location>
</feature>
<feature type="glycosylation site" description="N-linked (Glc) (glycation) lysine; alternate" evidence="11">
    <location>
        <position position="92"/>
    </location>
</feature>
<feature type="glycosylation site" description="O-linked (GlcNAc) threonine" evidence="4">
    <location>
        <position position="170"/>
    </location>
</feature>